<keyword id="KW-0963">Cytoplasm</keyword>
<keyword id="KW-0413">Isomerase</keyword>
<keyword id="KW-0627">Porphyrin biosynthesis</keyword>
<keyword id="KW-0663">Pyridoxal phosphate</keyword>
<name>GSA_BURTA</name>
<dbReference type="EC" id="5.4.3.8" evidence="1"/>
<dbReference type="EMBL" id="CP000086">
    <property type="protein sequence ID" value="ABC37698.1"/>
    <property type="molecule type" value="Genomic_DNA"/>
</dbReference>
<dbReference type="SMR" id="Q2SYB2"/>
<dbReference type="KEGG" id="bte:BTH_I1543"/>
<dbReference type="HOGENOM" id="CLU_016922_1_5_4"/>
<dbReference type="UniPathway" id="UPA00251">
    <property type="reaction ID" value="UER00317"/>
</dbReference>
<dbReference type="Proteomes" id="UP000001930">
    <property type="component" value="Chromosome I"/>
</dbReference>
<dbReference type="GO" id="GO:0005737">
    <property type="term" value="C:cytoplasm"/>
    <property type="evidence" value="ECO:0007669"/>
    <property type="project" value="UniProtKB-SubCell"/>
</dbReference>
<dbReference type="GO" id="GO:0042286">
    <property type="term" value="F:glutamate-1-semialdehyde 2,1-aminomutase activity"/>
    <property type="evidence" value="ECO:0007669"/>
    <property type="project" value="UniProtKB-UniRule"/>
</dbReference>
<dbReference type="GO" id="GO:0030170">
    <property type="term" value="F:pyridoxal phosphate binding"/>
    <property type="evidence" value="ECO:0007669"/>
    <property type="project" value="InterPro"/>
</dbReference>
<dbReference type="GO" id="GO:0008483">
    <property type="term" value="F:transaminase activity"/>
    <property type="evidence" value="ECO:0007669"/>
    <property type="project" value="InterPro"/>
</dbReference>
<dbReference type="GO" id="GO:0006782">
    <property type="term" value="P:protoporphyrinogen IX biosynthetic process"/>
    <property type="evidence" value="ECO:0007669"/>
    <property type="project" value="UniProtKB-UniRule"/>
</dbReference>
<dbReference type="CDD" id="cd00610">
    <property type="entry name" value="OAT_like"/>
    <property type="match status" value="1"/>
</dbReference>
<dbReference type="FunFam" id="3.40.640.10:FF:000021">
    <property type="entry name" value="Glutamate-1-semialdehyde 2,1-aminomutase"/>
    <property type="match status" value="1"/>
</dbReference>
<dbReference type="Gene3D" id="3.90.1150.10">
    <property type="entry name" value="Aspartate Aminotransferase, domain 1"/>
    <property type="match status" value="1"/>
</dbReference>
<dbReference type="Gene3D" id="3.40.640.10">
    <property type="entry name" value="Type I PLP-dependent aspartate aminotransferase-like (Major domain)"/>
    <property type="match status" value="1"/>
</dbReference>
<dbReference type="HAMAP" id="MF_00375">
    <property type="entry name" value="HemL_aminotrans_3"/>
    <property type="match status" value="1"/>
</dbReference>
<dbReference type="InterPro" id="IPR004639">
    <property type="entry name" value="4pyrrol_synth_GluAld_NH2Trfase"/>
</dbReference>
<dbReference type="InterPro" id="IPR005814">
    <property type="entry name" value="Aminotrans_3"/>
</dbReference>
<dbReference type="InterPro" id="IPR049704">
    <property type="entry name" value="Aminotrans_3_PPA_site"/>
</dbReference>
<dbReference type="InterPro" id="IPR015424">
    <property type="entry name" value="PyrdxlP-dep_Trfase"/>
</dbReference>
<dbReference type="InterPro" id="IPR015421">
    <property type="entry name" value="PyrdxlP-dep_Trfase_major"/>
</dbReference>
<dbReference type="InterPro" id="IPR015422">
    <property type="entry name" value="PyrdxlP-dep_Trfase_small"/>
</dbReference>
<dbReference type="NCBIfam" id="TIGR00713">
    <property type="entry name" value="hemL"/>
    <property type="match status" value="1"/>
</dbReference>
<dbReference type="NCBIfam" id="NF000818">
    <property type="entry name" value="PRK00062.1"/>
    <property type="match status" value="1"/>
</dbReference>
<dbReference type="PANTHER" id="PTHR43713">
    <property type="entry name" value="GLUTAMATE-1-SEMIALDEHYDE 2,1-AMINOMUTASE"/>
    <property type="match status" value="1"/>
</dbReference>
<dbReference type="PANTHER" id="PTHR43713:SF3">
    <property type="entry name" value="GLUTAMATE-1-SEMIALDEHYDE 2,1-AMINOMUTASE 1, CHLOROPLASTIC-RELATED"/>
    <property type="match status" value="1"/>
</dbReference>
<dbReference type="Pfam" id="PF00202">
    <property type="entry name" value="Aminotran_3"/>
    <property type="match status" value="1"/>
</dbReference>
<dbReference type="SUPFAM" id="SSF53383">
    <property type="entry name" value="PLP-dependent transferases"/>
    <property type="match status" value="1"/>
</dbReference>
<dbReference type="PROSITE" id="PS00600">
    <property type="entry name" value="AA_TRANSFER_CLASS_3"/>
    <property type="match status" value="1"/>
</dbReference>
<feature type="chain" id="PRO_0000243558" description="Glutamate-1-semialdehyde 2,1-aminomutase">
    <location>
        <begin position="1"/>
        <end position="427"/>
    </location>
</feature>
<feature type="modified residue" description="N6-(pyridoxal phosphate)lysine" evidence="1">
    <location>
        <position position="265"/>
    </location>
</feature>
<organism>
    <name type="scientific">Burkholderia thailandensis (strain ATCC 700388 / DSM 13276 / CCUG 48851 / CIP 106301 / E264)</name>
    <dbReference type="NCBI Taxonomy" id="271848"/>
    <lineage>
        <taxon>Bacteria</taxon>
        <taxon>Pseudomonadati</taxon>
        <taxon>Pseudomonadota</taxon>
        <taxon>Betaproteobacteria</taxon>
        <taxon>Burkholderiales</taxon>
        <taxon>Burkholderiaceae</taxon>
        <taxon>Burkholderia</taxon>
        <taxon>pseudomallei group</taxon>
    </lineage>
</organism>
<sequence length="427" mass="44915">MSNNQTLFERAQRTIPGGVNSPVRAFRSVGGTPRFVARAQGAYFWDADGKRYIDYIGSWGPMIVGHVHPDVLAAVQRVLADGFSFGAPTEAEIEIAEEICKLVPSIEQVRMVSSGTEATMSALRLARGFTGRSRIVKFEGCYHGHADSLLVKAGSGLLTFGNPTSAGVPADVAKHTTVLEYNNVAALEEAFAAFGDEIAAVIVEPVAGNMNLVRGTPEFLNALRALCTKHGAVLIFDEVMCGFRVALGGAQQHYGIKPDLTCLGKVIGGGMPAAAFGGRGDIMSHLAPLGGVYQAGTLSGNPVAVAAGLATLRLIQAPGFHDALADKTRRLADGLAAEARAAGVPFSADAIGGMFGLYFTEQVPASFADVTKSDIERFNRFFHLMLDAGVYFAPSAYEAGFVSSAHDDATLDATLDAARRAFAALRA</sequence>
<accession>Q2SYB2</accession>
<comment type="catalytic activity">
    <reaction evidence="1">
        <text>(S)-4-amino-5-oxopentanoate = 5-aminolevulinate</text>
        <dbReference type="Rhea" id="RHEA:14265"/>
        <dbReference type="ChEBI" id="CHEBI:57501"/>
        <dbReference type="ChEBI" id="CHEBI:356416"/>
        <dbReference type="EC" id="5.4.3.8"/>
    </reaction>
</comment>
<comment type="cofactor">
    <cofactor evidence="1">
        <name>pyridoxal 5'-phosphate</name>
        <dbReference type="ChEBI" id="CHEBI:597326"/>
    </cofactor>
</comment>
<comment type="pathway">
    <text evidence="1">Porphyrin-containing compound metabolism; protoporphyrin-IX biosynthesis; 5-aminolevulinate from L-glutamyl-tRNA(Glu): step 2/2.</text>
</comment>
<comment type="subunit">
    <text evidence="1">Homodimer.</text>
</comment>
<comment type="subcellular location">
    <subcellularLocation>
        <location evidence="1">Cytoplasm</location>
    </subcellularLocation>
</comment>
<comment type="similarity">
    <text evidence="1">Belongs to the class-III pyridoxal-phosphate-dependent aminotransferase family. HemL subfamily.</text>
</comment>
<protein>
    <recommendedName>
        <fullName evidence="1">Glutamate-1-semialdehyde 2,1-aminomutase</fullName>
        <shortName evidence="1">GSA</shortName>
        <ecNumber evidence="1">5.4.3.8</ecNumber>
    </recommendedName>
    <alternativeName>
        <fullName evidence="1">Glutamate-1-semialdehyde aminotransferase</fullName>
        <shortName evidence="1">GSA-AT</shortName>
    </alternativeName>
</protein>
<evidence type="ECO:0000255" key="1">
    <source>
        <dbReference type="HAMAP-Rule" id="MF_00375"/>
    </source>
</evidence>
<reference key="1">
    <citation type="journal article" date="2005" name="BMC Genomics">
        <title>Bacterial genome adaptation to niches: divergence of the potential virulence genes in three Burkholderia species of different survival strategies.</title>
        <authorList>
            <person name="Kim H.S."/>
            <person name="Schell M.A."/>
            <person name="Yu Y."/>
            <person name="Ulrich R.L."/>
            <person name="Sarria S.H."/>
            <person name="Nierman W.C."/>
            <person name="DeShazer D."/>
        </authorList>
    </citation>
    <scope>NUCLEOTIDE SEQUENCE [LARGE SCALE GENOMIC DNA]</scope>
    <source>
        <strain>ATCC 700388 / DSM 13276 / CCUG 48851 / CIP 106301 / E264</strain>
    </source>
</reference>
<gene>
    <name evidence="1" type="primary">hemL</name>
    <name type="ordered locus">BTH_I1543</name>
</gene>
<proteinExistence type="inferred from homology"/>